<name>NHAA_SYNFM</name>
<dbReference type="EMBL" id="CP000478">
    <property type="protein sequence ID" value="ABK18248.1"/>
    <property type="molecule type" value="Genomic_DNA"/>
</dbReference>
<dbReference type="SMR" id="A0LLE6"/>
<dbReference type="FunCoup" id="A0LLE6">
    <property type="interactions" value="85"/>
</dbReference>
<dbReference type="STRING" id="335543.Sfum_2570"/>
<dbReference type="KEGG" id="sfu:Sfum_2570"/>
<dbReference type="eggNOG" id="COG3004">
    <property type="taxonomic scope" value="Bacteria"/>
</dbReference>
<dbReference type="HOGENOM" id="CLU_015803_1_2_7"/>
<dbReference type="InParanoid" id="A0LLE6"/>
<dbReference type="OrthoDB" id="9808135at2"/>
<dbReference type="Proteomes" id="UP000001784">
    <property type="component" value="Chromosome"/>
</dbReference>
<dbReference type="GO" id="GO:0005886">
    <property type="term" value="C:plasma membrane"/>
    <property type="evidence" value="ECO:0007669"/>
    <property type="project" value="UniProtKB-SubCell"/>
</dbReference>
<dbReference type="GO" id="GO:0015385">
    <property type="term" value="F:sodium:proton antiporter activity"/>
    <property type="evidence" value="ECO:0007669"/>
    <property type="project" value="TreeGrafter"/>
</dbReference>
<dbReference type="GO" id="GO:0006885">
    <property type="term" value="P:regulation of pH"/>
    <property type="evidence" value="ECO:0007669"/>
    <property type="project" value="InterPro"/>
</dbReference>
<dbReference type="Gene3D" id="1.20.1530.10">
    <property type="entry name" value="Na+/H+ antiporter like domain"/>
    <property type="match status" value="1"/>
</dbReference>
<dbReference type="HAMAP" id="MF_01844">
    <property type="entry name" value="NhaA"/>
    <property type="match status" value="1"/>
</dbReference>
<dbReference type="InterPro" id="IPR023171">
    <property type="entry name" value="Na/H_antiporter_dom_sf"/>
</dbReference>
<dbReference type="InterPro" id="IPR004670">
    <property type="entry name" value="NhaA"/>
</dbReference>
<dbReference type="NCBIfam" id="TIGR00773">
    <property type="entry name" value="NhaA"/>
    <property type="match status" value="1"/>
</dbReference>
<dbReference type="PANTHER" id="PTHR30341:SF0">
    <property type="entry name" value="NA(+)_H(+) ANTIPORTER NHAA"/>
    <property type="match status" value="1"/>
</dbReference>
<dbReference type="PANTHER" id="PTHR30341">
    <property type="entry name" value="SODIUM ION/PROTON ANTIPORTER NHAA-RELATED"/>
    <property type="match status" value="1"/>
</dbReference>
<dbReference type="Pfam" id="PF06965">
    <property type="entry name" value="Na_H_antiport_1"/>
    <property type="match status" value="1"/>
</dbReference>
<keyword id="KW-0050">Antiport</keyword>
<keyword id="KW-0997">Cell inner membrane</keyword>
<keyword id="KW-1003">Cell membrane</keyword>
<keyword id="KW-0406">Ion transport</keyword>
<keyword id="KW-0472">Membrane</keyword>
<keyword id="KW-1185">Reference proteome</keyword>
<keyword id="KW-0915">Sodium</keyword>
<keyword id="KW-0739">Sodium transport</keyword>
<keyword id="KW-0812">Transmembrane</keyword>
<keyword id="KW-1133">Transmembrane helix</keyword>
<keyword id="KW-0813">Transport</keyword>
<protein>
    <recommendedName>
        <fullName evidence="1">Na(+)/H(+) antiporter NhaA</fullName>
    </recommendedName>
    <alternativeName>
        <fullName evidence="1">Sodium/proton antiporter NhaA</fullName>
    </alternativeName>
</protein>
<reference key="1">
    <citation type="submission" date="2006-10" db="EMBL/GenBank/DDBJ databases">
        <title>Complete sequence of Syntrophobacter fumaroxidans MPOB.</title>
        <authorList>
            <consortium name="US DOE Joint Genome Institute"/>
            <person name="Copeland A."/>
            <person name="Lucas S."/>
            <person name="Lapidus A."/>
            <person name="Barry K."/>
            <person name="Detter J.C."/>
            <person name="Glavina del Rio T."/>
            <person name="Hammon N."/>
            <person name="Israni S."/>
            <person name="Pitluck S."/>
            <person name="Goltsman E.G."/>
            <person name="Martinez M."/>
            <person name="Schmutz J."/>
            <person name="Larimer F."/>
            <person name="Land M."/>
            <person name="Hauser L."/>
            <person name="Kyrpides N."/>
            <person name="Kim E."/>
            <person name="Boone D.R."/>
            <person name="Brockman F."/>
            <person name="Culley D."/>
            <person name="Ferry J."/>
            <person name="Gunsalus R."/>
            <person name="McInerney M.J."/>
            <person name="Morrison M."/>
            <person name="Plugge C."/>
            <person name="Rohlin L."/>
            <person name="Scholten J."/>
            <person name="Sieber J."/>
            <person name="Stams A.J.M."/>
            <person name="Worm P."/>
            <person name="Henstra A.M."/>
            <person name="Richardson P."/>
        </authorList>
    </citation>
    <scope>NUCLEOTIDE SEQUENCE [LARGE SCALE GENOMIC DNA]</scope>
    <source>
        <strain>DSM 10017 / MPOB</strain>
    </source>
</reference>
<organism>
    <name type="scientific">Syntrophobacter fumaroxidans (strain DSM 10017 / MPOB)</name>
    <dbReference type="NCBI Taxonomy" id="335543"/>
    <lineage>
        <taxon>Bacteria</taxon>
        <taxon>Pseudomonadati</taxon>
        <taxon>Thermodesulfobacteriota</taxon>
        <taxon>Syntrophobacteria</taxon>
        <taxon>Syntrophobacterales</taxon>
        <taxon>Syntrophobacteraceae</taxon>
        <taxon>Syntrophobacter</taxon>
    </lineage>
</organism>
<comment type="function">
    <text evidence="1">Na(+)/H(+) antiporter that extrudes sodium in exchange for external protons.</text>
</comment>
<comment type="catalytic activity">
    <reaction evidence="1">
        <text>Na(+)(in) + 2 H(+)(out) = Na(+)(out) + 2 H(+)(in)</text>
        <dbReference type="Rhea" id="RHEA:29251"/>
        <dbReference type="ChEBI" id="CHEBI:15378"/>
        <dbReference type="ChEBI" id="CHEBI:29101"/>
    </reaction>
    <physiologicalReaction direction="left-to-right" evidence="1">
        <dbReference type="Rhea" id="RHEA:29252"/>
    </physiologicalReaction>
</comment>
<comment type="subcellular location">
    <subcellularLocation>
        <location evidence="1">Cell inner membrane</location>
        <topology evidence="1">Multi-pass membrane protein</topology>
    </subcellularLocation>
</comment>
<comment type="similarity">
    <text evidence="1">Belongs to the NhaA Na(+)/H(+) (TC 2.A.33) antiporter family.</text>
</comment>
<feature type="chain" id="PRO_0000334451" description="Na(+)/H(+) antiporter NhaA">
    <location>
        <begin position="1"/>
        <end position="472"/>
    </location>
</feature>
<feature type="transmembrane region" description="Helical" evidence="1">
    <location>
        <begin position="48"/>
        <end position="68"/>
    </location>
</feature>
<feature type="transmembrane region" description="Helical" evidence="1">
    <location>
        <begin position="91"/>
        <end position="111"/>
    </location>
</feature>
<feature type="transmembrane region" description="Helical" evidence="1">
    <location>
        <begin position="129"/>
        <end position="149"/>
    </location>
</feature>
<feature type="transmembrane region" description="Helical" evidence="1">
    <location>
        <begin position="157"/>
        <end position="177"/>
    </location>
</feature>
<feature type="transmembrane region" description="Helical" evidence="1">
    <location>
        <begin position="185"/>
        <end position="205"/>
    </location>
</feature>
<feature type="transmembrane region" description="Helical" evidence="1">
    <location>
        <begin position="210"/>
        <end position="230"/>
    </location>
</feature>
<feature type="transmembrane region" description="Helical" evidence="1">
    <location>
        <begin position="237"/>
        <end position="257"/>
    </location>
</feature>
<feature type="transmembrane region" description="Helical" evidence="1">
    <location>
        <begin position="337"/>
        <end position="357"/>
    </location>
</feature>
<feature type="transmembrane region" description="Helical" evidence="1">
    <location>
        <begin position="374"/>
        <end position="394"/>
    </location>
</feature>
<feature type="transmembrane region" description="Helical" evidence="1">
    <location>
        <begin position="410"/>
        <end position="430"/>
    </location>
</feature>
<feature type="transmembrane region" description="Helical" evidence="1">
    <location>
        <begin position="443"/>
        <end position="463"/>
    </location>
</feature>
<accession>A0LLE6</accession>
<gene>
    <name evidence="1" type="primary">nhaA</name>
    <name type="ordered locus">Sfum_2570</name>
</gene>
<sequence>MGRSSARDGQMPLRDIMDKKKRKNEYALERLFGRILSPFEAFLKRTTAGGIVLMGTTVLTLIAANSAWGDAFLRFWEQRVRFGIGSLQLEMSLHDLINDGLMSLFFLVVGLELKREMKVGELSSWRDAALPVFAAAGGMVVPALVYFAVNPHGTAAAGWGIPMATDIAFAVGILVLLSWRIPPGLIIFLTALAIADDLGAVLVIALFYTHEISLGAIGFASAVLFLLLLLNRGGIRHAIPYGVLGVLLWMALHHSGVHSTLAGVLLAFTIPARPARAPAEFEQRLVELQNAFHAEAAAPDFVDQPLSNPRMATIAETLERNSRAVQSPLQRMEHRLGPWVTFIVIPLFALNNVGIDFEKIALLQGLCEPVTMGVCLGLVFGKFTGISVFSWIAVRLGIGRLPSEVRWRHLLGVAWLGGIGFTMSLFISQLAFDDRLLQEQAKLGILTASLLSAMIGMTWLYFGGTRARPNPE</sequence>
<proteinExistence type="inferred from homology"/>
<evidence type="ECO:0000255" key="1">
    <source>
        <dbReference type="HAMAP-Rule" id="MF_01844"/>
    </source>
</evidence>